<feature type="chain" id="PRO_1000203660" description="Queuine tRNA-ribosyltransferase">
    <location>
        <begin position="1"/>
        <end position="383"/>
    </location>
</feature>
<feature type="region of interest" description="RNA binding" evidence="1">
    <location>
        <begin position="248"/>
        <end position="254"/>
    </location>
</feature>
<feature type="region of interest" description="RNA binding; important for wobble base 34 recognition" evidence="1">
    <location>
        <begin position="272"/>
        <end position="276"/>
    </location>
</feature>
<feature type="active site" description="Proton acceptor" evidence="1">
    <location>
        <position position="92"/>
    </location>
</feature>
<feature type="active site" description="Nucleophile" evidence="1">
    <location>
        <position position="267"/>
    </location>
</feature>
<feature type="binding site" evidence="1">
    <location>
        <begin position="92"/>
        <end position="96"/>
    </location>
    <ligand>
        <name>substrate</name>
    </ligand>
</feature>
<feature type="binding site" evidence="1">
    <location>
        <position position="146"/>
    </location>
    <ligand>
        <name>substrate</name>
    </ligand>
</feature>
<feature type="binding site" evidence="1">
    <location>
        <position position="190"/>
    </location>
    <ligand>
        <name>substrate</name>
    </ligand>
</feature>
<feature type="binding site" evidence="1">
    <location>
        <position position="217"/>
    </location>
    <ligand>
        <name>substrate</name>
    </ligand>
</feature>
<feature type="binding site" evidence="1">
    <location>
        <position position="310"/>
    </location>
    <ligand>
        <name>Zn(2+)</name>
        <dbReference type="ChEBI" id="CHEBI:29105"/>
    </ligand>
</feature>
<feature type="binding site" evidence="1">
    <location>
        <position position="312"/>
    </location>
    <ligand>
        <name>Zn(2+)</name>
        <dbReference type="ChEBI" id="CHEBI:29105"/>
    </ligand>
</feature>
<feature type="binding site" evidence="1">
    <location>
        <position position="315"/>
    </location>
    <ligand>
        <name>Zn(2+)</name>
        <dbReference type="ChEBI" id="CHEBI:29105"/>
    </ligand>
</feature>
<feature type="binding site" evidence="1">
    <location>
        <position position="341"/>
    </location>
    <ligand>
        <name>Zn(2+)</name>
        <dbReference type="ChEBI" id="CHEBI:29105"/>
    </ligand>
</feature>
<evidence type="ECO:0000255" key="1">
    <source>
        <dbReference type="HAMAP-Rule" id="MF_00168"/>
    </source>
</evidence>
<gene>
    <name evidence="1" type="primary">tgt</name>
    <name type="ordered locus">Pcryo_1703</name>
</gene>
<reference key="1">
    <citation type="submission" date="2006-03" db="EMBL/GenBank/DDBJ databases">
        <title>Complete sequence of chromosome of Psychrobacter cryohalolentis K5.</title>
        <authorList>
            <consortium name="US DOE Joint Genome Institute"/>
            <person name="Copeland A."/>
            <person name="Lucas S."/>
            <person name="Lapidus A."/>
            <person name="Barry K."/>
            <person name="Detter J.C."/>
            <person name="Glavina T."/>
            <person name="Hammon N."/>
            <person name="Israni S."/>
            <person name="Dalin E."/>
            <person name="Tice H."/>
            <person name="Pitluck S."/>
            <person name="Brettin T."/>
            <person name="Bruce D."/>
            <person name="Han C."/>
            <person name="Tapia R."/>
            <person name="Sims D.R."/>
            <person name="Gilna P."/>
            <person name="Schmutz J."/>
            <person name="Larimer F."/>
            <person name="Land M."/>
            <person name="Hauser L."/>
            <person name="Kyrpides N."/>
            <person name="Kim E."/>
            <person name="Richardson P."/>
        </authorList>
    </citation>
    <scope>NUCLEOTIDE SEQUENCE [LARGE SCALE GENOMIC DNA]</scope>
    <source>
        <strain>ATCC BAA-1226 / DSM 17306 / VKM B-2378 / K5</strain>
    </source>
</reference>
<name>TGT_PSYCK</name>
<organism>
    <name type="scientific">Psychrobacter cryohalolentis (strain ATCC BAA-1226 / DSM 17306 / VKM B-2378 / K5)</name>
    <dbReference type="NCBI Taxonomy" id="335284"/>
    <lineage>
        <taxon>Bacteria</taxon>
        <taxon>Pseudomonadati</taxon>
        <taxon>Pseudomonadota</taxon>
        <taxon>Gammaproteobacteria</taxon>
        <taxon>Moraxellales</taxon>
        <taxon>Moraxellaceae</taxon>
        <taxon>Psychrobacter</taxon>
    </lineage>
</organism>
<keyword id="KW-0328">Glycosyltransferase</keyword>
<keyword id="KW-0479">Metal-binding</keyword>
<keyword id="KW-0671">Queuosine biosynthesis</keyword>
<keyword id="KW-0808">Transferase</keyword>
<keyword id="KW-0819">tRNA processing</keyword>
<keyword id="KW-0862">Zinc</keyword>
<dbReference type="EC" id="2.4.2.29" evidence="1"/>
<dbReference type="EMBL" id="CP000323">
    <property type="protein sequence ID" value="ABE75480.1"/>
    <property type="molecule type" value="Genomic_DNA"/>
</dbReference>
<dbReference type="RefSeq" id="WP_011514028.1">
    <property type="nucleotide sequence ID" value="NC_007969.1"/>
</dbReference>
<dbReference type="SMR" id="Q1QA23"/>
<dbReference type="STRING" id="335284.Pcryo_1703"/>
<dbReference type="KEGG" id="pcr:Pcryo_1703"/>
<dbReference type="eggNOG" id="COG0343">
    <property type="taxonomic scope" value="Bacteria"/>
</dbReference>
<dbReference type="HOGENOM" id="CLU_022060_0_1_6"/>
<dbReference type="UniPathway" id="UPA00392"/>
<dbReference type="Proteomes" id="UP000002425">
    <property type="component" value="Chromosome"/>
</dbReference>
<dbReference type="GO" id="GO:0005829">
    <property type="term" value="C:cytosol"/>
    <property type="evidence" value="ECO:0007669"/>
    <property type="project" value="TreeGrafter"/>
</dbReference>
<dbReference type="GO" id="GO:0046872">
    <property type="term" value="F:metal ion binding"/>
    <property type="evidence" value="ECO:0007669"/>
    <property type="project" value="UniProtKB-KW"/>
</dbReference>
<dbReference type="GO" id="GO:0008479">
    <property type="term" value="F:tRNA-guanosine(34) queuine transglycosylase activity"/>
    <property type="evidence" value="ECO:0007669"/>
    <property type="project" value="UniProtKB-UniRule"/>
</dbReference>
<dbReference type="GO" id="GO:0008616">
    <property type="term" value="P:queuosine biosynthetic process"/>
    <property type="evidence" value="ECO:0007669"/>
    <property type="project" value="UniProtKB-UniRule"/>
</dbReference>
<dbReference type="GO" id="GO:0002099">
    <property type="term" value="P:tRNA wobble guanine modification"/>
    <property type="evidence" value="ECO:0007669"/>
    <property type="project" value="TreeGrafter"/>
</dbReference>
<dbReference type="GO" id="GO:0101030">
    <property type="term" value="P:tRNA-guanine transglycosylation"/>
    <property type="evidence" value="ECO:0007669"/>
    <property type="project" value="InterPro"/>
</dbReference>
<dbReference type="FunFam" id="3.20.20.105:FF:000001">
    <property type="entry name" value="Queuine tRNA-ribosyltransferase"/>
    <property type="match status" value="1"/>
</dbReference>
<dbReference type="Gene3D" id="3.20.20.105">
    <property type="entry name" value="Queuine tRNA-ribosyltransferase-like"/>
    <property type="match status" value="1"/>
</dbReference>
<dbReference type="HAMAP" id="MF_00168">
    <property type="entry name" value="Q_tRNA_Tgt"/>
    <property type="match status" value="1"/>
</dbReference>
<dbReference type="InterPro" id="IPR050076">
    <property type="entry name" value="ArchSynthase1/Queuine_TRR"/>
</dbReference>
<dbReference type="InterPro" id="IPR004803">
    <property type="entry name" value="TGT"/>
</dbReference>
<dbReference type="InterPro" id="IPR036511">
    <property type="entry name" value="TGT-like_sf"/>
</dbReference>
<dbReference type="InterPro" id="IPR002616">
    <property type="entry name" value="tRNA_ribo_trans-like"/>
</dbReference>
<dbReference type="NCBIfam" id="TIGR00430">
    <property type="entry name" value="Q_tRNA_tgt"/>
    <property type="match status" value="1"/>
</dbReference>
<dbReference type="NCBIfam" id="TIGR00449">
    <property type="entry name" value="tgt_general"/>
    <property type="match status" value="1"/>
</dbReference>
<dbReference type="PANTHER" id="PTHR46499">
    <property type="entry name" value="QUEUINE TRNA-RIBOSYLTRANSFERASE"/>
    <property type="match status" value="1"/>
</dbReference>
<dbReference type="PANTHER" id="PTHR46499:SF1">
    <property type="entry name" value="QUEUINE TRNA-RIBOSYLTRANSFERASE"/>
    <property type="match status" value="1"/>
</dbReference>
<dbReference type="Pfam" id="PF01702">
    <property type="entry name" value="TGT"/>
    <property type="match status" value="1"/>
</dbReference>
<dbReference type="SUPFAM" id="SSF51713">
    <property type="entry name" value="tRNA-guanine transglycosylase"/>
    <property type="match status" value="1"/>
</dbReference>
<accession>Q1QA23</accession>
<proteinExistence type="inferred from homology"/>
<comment type="function">
    <text evidence="1">Catalyzes the base-exchange of a guanine (G) residue with the queuine precursor 7-aminomethyl-7-deazaguanine (PreQ1) at position 34 (anticodon wobble position) in tRNAs with GU(N) anticodons (tRNA-Asp, -Asn, -His and -Tyr). Catalysis occurs through a double-displacement mechanism. The nucleophile active site attacks the C1' of nucleotide 34 to detach the guanine base from the RNA, forming a covalent enzyme-RNA intermediate. The proton acceptor active site deprotonates the incoming PreQ1, allowing a nucleophilic attack on the C1' of the ribose to form the product. After dissociation, two additional enzymatic reactions on the tRNA convert PreQ1 to queuine (Q), resulting in the hypermodified nucleoside queuosine (7-(((4,5-cis-dihydroxy-2-cyclopenten-1-yl)amino)methyl)-7-deazaguanosine).</text>
</comment>
<comment type="catalytic activity">
    <reaction evidence="1">
        <text>7-aminomethyl-7-carbaguanine + guanosine(34) in tRNA = 7-aminomethyl-7-carbaguanosine(34) in tRNA + guanine</text>
        <dbReference type="Rhea" id="RHEA:24104"/>
        <dbReference type="Rhea" id="RHEA-COMP:10341"/>
        <dbReference type="Rhea" id="RHEA-COMP:10342"/>
        <dbReference type="ChEBI" id="CHEBI:16235"/>
        <dbReference type="ChEBI" id="CHEBI:58703"/>
        <dbReference type="ChEBI" id="CHEBI:74269"/>
        <dbReference type="ChEBI" id="CHEBI:82833"/>
        <dbReference type="EC" id="2.4.2.29"/>
    </reaction>
</comment>
<comment type="cofactor">
    <cofactor evidence="1">
        <name>Zn(2+)</name>
        <dbReference type="ChEBI" id="CHEBI:29105"/>
    </cofactor>
    <text evidence="1">Binds 1 zinc ion per subunit.</text>
</comment>
<comment type="pathway">
    <text evidence="1">tRNA modification; tRNA-queuosine biosynthesis.</text>
</comment>
<comment type="subunit">
    <text evidence="1">Homodimer. Within each dimer, one monomer is responsible for RNA recognition and catalysis, while the other monomer binds to the replacement base PreQ1.</text>
</comment>
<comment type="similarity">
    <text evidence="1">Belongs to the queuine tRNA-ribosyltransferase family.</text>
</comment>
<sequence length="383" mass="43097">MQFVLHKTASGVTRARRGTVHLNHGDVQTPAFMPVGTYGTVKGMLPRDIEAIGADIILGNTFHLWLRPGTDIIDKFGGLHKFMHWDKPILTDSGGFQVFSLGAMRKITEEGVTFKSPIDGAKVFLSPEKSMQIQYSLNSDIVMQFDECTPYPATHDEAKKSLELSLRWGQRCVDEHKNLGSTNALFGIIQGSMYADLRKQSLEGLLEIGFDGYAIGGLSVGEPKEEMIDVLDYIADDMPADKPRYLMGVGKPEDLVEGVRRGVDMFDCVMPTRNARNGHYFVTGDADNAGVVRIRNSQYRTDEGPLDPECDCYTCQNFSRAYLSHLNKCKEMLGAQLATIHNLRYYQRLMQNIRDAIEQDKFDEFVNEFYSKRGQTVPELNLR</sequence>
<protein>
    <recommendedName>
        <fullName evidence="1">Queuine tRNA-ribosyltransferase</fullName>
        <ecNumber evidence="1">2.4.2.29</ecNumber>
    </recommendedName>
    <alternativeName>
        <fullName evidence="1">Guanine insertion enzyme</fullName>
    </alternativeName>
    <alternativeName>
        <fullName evidence="1">tRNA-guanine transglycosylase</fullName>
    </alternativeName>
</protein>